<gene>
    <name evidence="1" type="primary">modC</name>
    <name type="ordered locus">RL4687</name>
</gene>
<protein>
    <recommendedName>
        <fullName evidence="1">Molybdenum import ATP-binding protein ModC</fullName>
        <ecNumber evidence="1">7.3.2.5</ecNumber>
    </recommendedName>
</protein>
<dbReference type="EC" id="7.3.2.5" evidence="1"/>
<dbReference type="EMBL" id="AM236080">
    <property type="protein sequence ID" value="CAK10170.1"/>
    <property type="molecule type" value="Genomic_DNA"/>
</dbReference>
<dbReference type="RefSeq" id="WP_011654025.1">
    <property type="nucleotide sequence ID" value="NC_008380.1"/>
</dbReference>
<dbReference type="SMR" id="Q1MA70"/>
<dbReference type="EnsemblBacteria" id="CAK10170">
    <property type="protein sequence ID" value="CAK10170"/>
    <property type="gene ID" value="RL4687"/>
</dbReference>
<dbReference type="KEGG" id="rle:RL4687"/>
<dbReference type="eggNOG" id="COG4148">
    <property type="taxonomic scope" value="Bacteria"/>
</dbReference>
<dbReference type="HOGENOM" id="CLU_000604_1_1_5"/>
<dbReference type="Proteomes" id="UP000006575">
    <property type="component" value="Chromosome"/>
</dbReference>
<dbReference type="GO" id="GO:0005886">
    <property type="term" value="C:plasma membrane"/>
    <property type="evidence" value="ECO:0007669"/>
    <property type="project" value="UniProtKB-SubCell"/>
</dbReference>
<dbReference type="GO" id="GO:0015412">
    <property type="term" value="F:ABC-type molybdate transporter activity"/>
    <property type="evidence" value="ECO:0007669"/>
    <property type="project" value="UniProtKB-EC"/>
</dbReference>
<dbReference type="GO" id="GO:0005524">
    <property type="term" value="F:ATP binding"/>
    <property type="evidence" value="ECO:0007669"/>
    <property type="project" value="UniProtKB-KW"/>
</dbReference>
<dbReference type="GO" id="GO:0016887">
    <property type="term" value="F:ATP hydrolysis activity"/>
    <property type="evidence" value="ECO:0007669"/>
    <property type="project" value="InterPro"/>
</dbReference>
<dbReference type="Gene3D" id="2.40.50.100">
    <property type="match status" value="1"/>
</dbReference>
<dbReference type="Gene3D" id="3.40.50.300">
    <property type="entry name" value="P-loop containing nucleotide triphosphate hydrolases"/>
    <property type="match status" value="1"/>
</dbReference>
<dbReference type="InterPro" id="IPR003593">
    <property type="entry name" value="AAA+_ATPase"/>
</dbReference>
<dbReference type="InterPro" id="IPR003439">
    <property type="entry name" value="ABC_transporter-like_ATP-bd"/>
</dbReference>
<dbReference type="InterPro" id="IPR017871">
    <property type="entry name" value="ABC_transporter-like_CS"/>
</dbReference>
<dbReference type="InterPro" id="IPR008995">
    <property type="entry name" value="Mo/tungstate-bd_C_term_dom"/>
</dbReference>
<dbReference type="InterPro" id="IPR011868">
    <property type="entry name" value="ModC_ABC_ATP-bd"/>
</dbReference>
<dbReference type="InterPro" id="IPR050334">
    <property type="entry name" value="Molybdenum_import_ModC"/>
</dbReference>
<dbReference type="InterPro" id="IPR004606">
    <property type="entry name" value="Mop_domain"/>
</dbReference>
<dbReference type="InterPro" id="IPR027417">
    <property type="entry name" value="P-loop_NTPase"/>
</dbReference>
<dbReference type="InterPro" id="IPR005116">
    <property type="entry name" value="Transp-assoc_OB_typ1"/>
</dbReference>
<dbReference type="NCBIfam" id="TIGR02142">
    <property type="entry name" value="modC_ABC"/>
    <property type="match status" value="1"/>
</dbReference>
<dbReference type="PANTHER" id="PTHR43514">
    <property type="entry name" value="ABC TRANSPORTER I FAMILY MEMBER 10"/>
    <property type="match status" value="1"/>
</dbReference>
<dbReference type="PANTHER" id="PTHR43514:SF4">
    <property type="entry name" value="ABC TRANSPORTER I FAMILY MEMBER 10"/>
    <property type="match status" value="1"/>
</dbReference>
<dbReference type="Pfam" id="PF00005">
    <property type="entry name" value="ABC_tran"/>
    <property type="match status" value="1"/>
</dbReference>
<dbReference type="Pfam" id="PF03459">
    <property type="entry name" value="TOBE"/>
    <property type="match status" value="1"/>
</dbReference>
<dbReference type="SMART" id="SM00382">
    <property type="entry name" value="AAA"/>
    <property type="match status" value="1"/>
</dbReference>
<dbReference type="SUPFAM" id="SSF50331">
    <property type="entry name" value="MOP-like"/>
    <property type="match status" value="1"/>
</dbReference>
<dbReference type="SUPFAM" id="SSF52540">
    <property type="entry name" value="P-loop containing nucleoside triphosphate hydrolases"/>
    <property type="match status" value="1"/>
</dbReference>
<dbReference type="PROSITE" id="PS00211">
    <property type="entry name" value="ABC_TRANSPORTER_1"/>
    <property type="match status" value="1"/>
</dbReference>
<dbReference type="PROSITE" id="PS50893">
    <property type="entry name" value="ABC_TRANSPORTER_2"/>
    <property type="match status" value="1"/>
</dbReference>
<dbReference type="PROSITE" id="PS51241">
    <property type="entry name" value="MODC"/>
    <property type="match status" value="1"/>
</dbReference>
<dbReference type="PROSITE" id="PS51866">
    <property type="entry name" value="MOP"/>
    <property type="match status" value="1"/>
</dbReference>
<accession>Q1MA70</accession>
<keyword id="KW-0067">ATP-binding</keyword>
<keyword id="KW-0997">Cell inner membrane</keyword>
<keyword id="KW-1003">Cell membrane</keyword>
<keyword id="KW-0472">Membrane</keyword>
<keyword id="KW-0500">Molybdenum</keyword>
<keyword id="KW-0547">Nucleotide-binding</keyword>
<keyword id="KW-1278">Translocase</keyword>
<keyword id="KW-0813">Transport</keyword>
<feature type="chain" id="PRO_0000271682" description="Molybdenum import ATP-binding protein ModC">
    <location>
        <begin position="1"/>
        <end position="355"/>
    </location>
</feature>
<feature type="domain" description="ABC transporter" evidence="1">
    <location>
        <begin position="1"/>
        <end position="233"/>
    </location>
</feature>
<feature type="domain" description="Mop" evidence="2">
    <location>
        <begin position="291"/>
        <end position="355"/>
    </location>
</feature>
<feature type="binding site" evidence="1">
    <location>
        <begin position="31"/>
        <end position="38"/>
    </location>
    <ligand>
        <name>ATP</name>
        <dbReference type="ChEBI" id="CHEBI:30616"/>
    </ligand>
</feature>
<proteinExistence type="inferred from homology"/>
<evidence type="ECO:0000255" key="1">
    <source>
        <dbReference type="HAMAP-Rule" id="MF_01705"/>
    </source>
</evidence>
<evidence type="ECO:0000255" key="2">
    <source>
        <dbReference type="PROSITE-ProRule" id="PRU01213"/>
    </source>
</evidence>
<name>MODC_RHIJ3</name>
<sequence length="355" mass="38678">MTLIVEAKQRLDAFSLDAAFTSERGVTALFGRSGSGKTSMIRIIAGLARPDEGRVVLDGEPLTETTTGIFVPKHRRRFGYVFQEARLFPHLSIRANLTYGRWFAARTAHGESFDHIVDLLGIETLLERSPAKLSGGEKQRVAIGRALLSSPRLLLMDEPLAALDDARKAEILPYLERLRDETDIPIVYVSHSIAEVARLANQVVVMRDGKVEATGPAIDILSRPSTASDRREAGALLEGTVESFDARHHLSTVALKSCQVHIPGAALAPGKSVRIRIPSRDVMLATTRPEGLSALNILEARIDGMSSTEDGTVEIRLDCGGDIILSRITTLSCERLDLRQGRAIFAIIKTVALEA</sequence>
<organism>
    <name type="scientific">Rhizobium johnstonii (strain DSM 114642 / LMG 32736 / 3841)</name>
    <name type="common">Rhizobium leguminosarum bv. viciae</name>
    <dbReference type="NCBI Taxonomy" id="216596"/>
    <lineage>
        <taxon>Bacteria</taxon>
        <taxon>Pseudomonadati</taxon>
        <taxon>Pseudomonadota</taxon>
        <taxon>Alphaproteobacteria</taxon>
        <taxon>Hyphomicrobiales</taxon>
        <taxon>Rhizobiaceae</taxon>
        <taxon>Rhizobium/Agrobacterium group</taxon>
        <taxon>Rhizobium</taxon>
        <taxon>Rhizobium johnstonii</taxon>
    </lineage>
</organism>
<reference key="1">
    <citation type="journal article" date="2006" name="Genome Biol.">
        <title>The genome of Rhizobium leguminosarum has recognizable core and accessory components.</title>
        <authorList>
            <person name="Young J.P.W."/>
            <person name="Crossman L.C."/>
            <person name="Johnston A.W.B."/>
            <person name="Thomson N.R."/>
            <person name="Ghazoui Z.F."/>
            <person name="Hull K.H."/>
            <person name="Wexler M."/>
            <person name="Curson A.R.J."/>
            <person name="Todd J.D."/>
            <person name="Poole P.S."/>
            <person name="Mauchline T.H."/>
            <person name="East A.K."/>
            <person name="Quail M.A."/>
            <person name="Churcher C."/>
            <person name="Arrowsmith C."/>
            <person name="Cherevach I."/>
            <person name="Chillingworth T."/>
            <person name="Clarke K."/>
            <person name="Cronin A."/>
            <person name="Davis P."/>
            <person name="Fraser A."/>
            <person name="Hance Z."/>
            <person name="Hauser H."/>
            <person name="Jagels K."/>
            <person name="Moule S."/>
            <person name="Mungall K."/>
            <person name="Norbertczak H."/>
            <person name="Rabbinowitsch E."/>
            <person name="Sanders M."/>
            <person name="Simmonds M."/>
            <person name="Whitehead S."/>
            <person name="Parkhill J."/>
        </authorList>
    </citation>
    <scope>NUCLEOTIDE SEQUENCE [LARGE SCALE GENOMIC DNA]</scope>
    <source>
        <strain>DSM 114642 / LMG 32736 / 3841</strain>
    </source>
</reference>
<comment type="function">
    <text evidence="1">Part of the ABC transporter complex ModABC involved in molybdenum import. Responsible for energy coupling to the transport system.</text>
</comment>
<comment type="catalytic activity">
    <reaction evidence="1">
        <text>molybdate(out) + ATP + H2O = molybdate(in) + ADP + phosphate + H(+)</text>
        <dbReference type="Rhea" id="RHEA:22020"/>
        <dbReference type="ChEBI" id="CHEBI:15377"/>
        <dbReference type="ChEBI" id="CHEBI:15378"/>
        <dbReference type="ChEBI" id="CHEBI:30616"/>
        <dbReference type="ChEBI" id="CHEBI:36264"/>
        <dbReference type="ChEBI" id="CHEBI:43474"/>
        <dbReference type="ChEBI" id="CHEBI:456216"/>
        <dbReference type="EC" id="7.3.2.5"/>
    </reaction>
</comment>
<comment type="subunit">
    <text evidence="1">The complex is composed of two ATP-binding proteins (ModC), two transmembrane proteins (ModB) and a solute-binding protein (ModA).</text>
</comment>
<comment type="subcellular location">
    <subcellularLocation>
        <location evidence="1">Cell inner membrane</location>
        <topology evidence="1">Peripheral membrane protein</topology>
    </subcellularLocation>
</comment>
<comment type="similarity">
    <text evidence="1">Belongs to the ABC transporter superfamily. Molybdate importer (TC 3.A.1.8) family.</text>
</comment>